<evidence type="ECO:0000255" key="1">
    <source>
        <dbReference type="HAMAP-Rule" id="MF_00639"/>
    </source>
</evidence>
<comment type="function">
    <text evidence="1">Cell wall formation. Catalyzes the addition of glutamate to the nucleotide precursor UDP-N-acetylmuramoyl-L-alanine (UMA).</text>
</comment>
<comment type="catalytic activity">
    <reaction evidence="1">
        <text>UDP-N-acetyl-alpha-D-muramoyl-L-alanine + D-glutamate + ATP = UDP-N-acetyl-alpha-D-muramoyl-L-alanyl-D-glutamate + ADP + phosphate + H(+)</text>
        <dbReference type="Rhea" id="RHEA:16429"/>
        <dbReference type="ChEBI" id="CHEBI:15378"/>
        <dbReference type="ChEBI" id="CHEBI:29986"/>
        <dbReference type="ChEBI" id="CHEBI:30616"/>
        <dbReference type="ChEBI" id="CHEBI:43474"/>
        <dbReference type="ChEBI" id="CHEBI:83898"/>
        <dbReference type="ChEBI" id="CHEBI:83900"/>
        <dbReference type="ChEBI" id="CHEBI:456216"/>
        <dbReference type="EC" id="6.3.2.9"/>
    </reaction>
</comment>
<comment type="pathway">
    <text evidence="1">Cell wall biogenesis; peptidoglycan biosynthesis.</text>
</comment>
<comment type="subcellular location">
    <subcellularLocation>
        <location evidence="1">Cytoplasm</location>
    </subcellularLocation>
</comment>
<comment type="similarity">
    <text evidence="1">Belongs to the MurCDEF family.</text>
</comment>
<name>MURD_RHILO</name>
<sequence length="466" mass="48855">MIPAASFAGKQVSLFGLGGSGIATARALIEGGAQVLAWDDNPDSVAKAAATGIATADLRGADWAKFSAFVLSPGVPLTHPKPHWTVELAKGAGVEVIGDIELFCRERILQAPTAPFIAITGTNGKSTTTALTAHILKSAGRDTQMGGNIGRAVMTLDPPKPDRHFVVECSSYQIDLAPSINPTAGILLNLTPDHLDRHGTMQHYASIKERLVAGSETAIIGIDDSWCAQIAERLERAGQQVIRISKRLPLTDGYFADGTNLMEAVHGRYSKVAFLEGIGSLRGQHNAQNALAAVAACLKVGLDLGEIQSGLESFPGLAHRMEQVGRKDHVLFVNDSKATNADAAAPALSSFPRIYWIAGGLPKEGGIEPLRGFFPRIAKAYLIGEAAPAFSATLGEAVPYEISGTLAAAVAHAAHDAAKDDSGEVVVLLSPACASFDQFKNFEVRGEAFRQAASAIDGVKPIGGAR</sequence>
<reference key="1">
    <citation type="journal article" date="2000" name="DNA Res.">
        <title>Complete genome structure of the nitrogen-fixing symbiotic bacterium Mesorhizobium loti.</title>
        <authorList>
            <person name="Kaneko T."/>
            <person name="Nakamura Y."/>
            <person name="Sato S."/>
            <person name="Asamizu E."/>
            <person name="Kato T."/>
            <person name="Sasamoto S."/>
            <person name="Watanabe A."/>
            <person name="Idesawa K."/>
            <person name="Ishikawa A."/>
            <person name="Kawashima K."/>
            <person name="Kimura T."/>
            <person name="Kishida Y."/>
            <person name="Kiyokawa C."/>
            <person name="Kohara M."/>
            <person name="Matsumoto M."/>
            <person name="Matsuno A."/>
            <person name="Mochizuki Y."/>
            <person name="Nakayama S."/>
            <person name="Nakazaki N."/>
            <person name="Shimpo S."/>
            <person name="Sugimoto M."/>
            <person name="Takeuchi C."/>
            <person name="Yamada M."/>
            <person name="Tabata S."/>
        </authorList>
    </citation>
    <scope>NUCLEOTIDE SEQUENCE [LARGE SCALE GENOMIC DNA]</scope>
    <source>
        <strain>LMG 29417 / CECT 9101 / MAFF 303099</strain>
    </source>
</reference>
<organism>
    <name type="scientific">Mesorhizobium japonicum (strain LMG 29417 / CECT 9101 / MAFF 303099)</name>
    <name type="common">Mesorhizobium loti (strain MAFF 303099)</name>
    <dbReference type="NCBI Taxonomy" id="266835"/>
    <lineage>
        <taxon>Bacteria</taxon>
        <taxon>Pseudomonadati</taxon>
        <taxon>Pseudomonadota</taxon>
        <taxon>Alphaproteobacteria</taxon>
        <taxon>Hyphomicrobiales</taxon>
        <taxon>Phyllobacteriaceae</taxon>
        <taxon>Mesorhizobium</taxon>
    </lineage>
</organism>
<gene>
    <name evidence="1" type="primary">murD</name>
    <name type="ordered locus">mll1557</name>
</gene>
<protein>
    <recommendedName>
        <fullName evidence="1">UDP-N-acetylmuramoylalanine--D-glutamate ligase</fullName>
        <ecNumber evidence="1">6.3.2.9</ecNumber>
    </recommendedName>
    <alternativeName>
        <fullName evidence="1">D-glutamic acid-adding enzyme</fullName>
    </alternativeName>
    <alternativeName>
        <fullName evidence="1">UDP-N-acetylmuramoyl-L-alanyl-D-glutamate synthetase</fullName>
    </alternativeName>
</protein>
<accession>Q98KB1</accession>
<feature type="chain" id="PRO_0000109068" description="UDP-N-acetylmuramoylalanine--D-glutamate ligase">
    <location>
        <begin position="1"/>
        <end position="466"/>
    </location>
</feature>
<feature type="binding site" evidence="1">
    <location>
        <begin position="121"/>
        <end position="127"/>
    </location>
    <ligand>
        <name>ATP</name>
        <dbReference type="ChEBI" id="CHEBI:30616"/>
    </ligand>
</feature>
<keyword id="KW-0067">ATP-binding</keyword>
<keyword id="KW-0131">Cell cycle</keyword>
<keyword id="KW-0132">Cell division</keyword>
<keyword id="KW-0133">Cell shape</keyword>
<keyword id="KW-0961">Cell wall biogenesis/degradation</keyword>
<keyword id="KW-0963">Cytoplasm</keyword>
<keyword id="KW-0436">Ligase</keyword>
<keyword id="KW-0547">Nucleotide-binding</keyword>
<keyword id="KW-0573">Peptidoglycan synthesis</keyword>
<proteinExistence type="inferred from homology"/>
<dbReference type="EC" id="6.3.2.9" evidence="1"/>
<dbReference type="EMBL" id="BA000012">
    <property type="protein sequence ID" value="BAB48903.1"/>
    <property type="molecule type" value="Genomic_DNA"/>
</dbReference>
<dbReference type="RefSeq" id="WP_010910256.1">
    <property type="nucleotide sequence ID" value="NC_002678.2"/>
</dbReference>
<dbReference type="SMR" id="Q98KB1"/>
<dbReference type="KEGG" id="mlo:mll1557"/>
<dbReference type="PATRIC" id="fig|266835.9.peg.1254"/>
<dbReference type="eggNOG" id="COG0771">
    <property type="taxonomic scope" value="Bacteria"/>
</dbReference>
<dbReference type="HOGENOM" id="CLU_032540_3_0_5"/>
<dbReference type="UniPathway" id="UPA00219"/>
<dbReference type="Proteomes" id="UP000000552">
    <property type="component" value="Chromosome"/>
</dbReference>
<dbReference type="GO" id="GO:0005737">
    <property type="term" value="C:cytoplasm"/>
    <property type="evidence" value="ECO:0007669"/>
    <property type="project" value="UniProtKB-SubCell"/>
</dbReference>
<dbReference type="GO" id="GO:0005524">
    <property type="term" value="F:ATP binding"/>
    <property type="evidence" value="ECO:0007669"/>
    <property type="project" value="UniProtKB-UniRule"/>
</dbReference>
<dbReference type="GO" id="GO:0004326">
    <property type="term" value="F:tetrahydrofolylpolyglutamate synthase activity"/>
    <property type="evidence" value="ECO:0007669"/>
    <property type="project" value="InterPro"/>
</dbReference>
<dbReference type="GO" id="GO:0008764">
    <property type="term" value="F:UDP-N-acetylmuramoylalanine-D-glutamate ligase activity"/>
    <property type="evidence" value="ECO:0007669"/>
    <property type="project" value="UniProtKB-UniRule"/>
</dbReference>
<dbReference type="GO" id="GO:0051301">
    <property type="term" value="P:cell division"/>
    <property type="evidence" value="ECO:0007669"/>
    <property type="project" value="UniProtKB-KW"/>
</dbReference>
<dbReference type="GO" id="GO:0071555">
    <property type="term" value="P:cell wall organization"/>
    <property type="evidence" value="ECO:0007669"/>
    <property type="project" value="UniProtKB-KW"/>
</dbReference>
<dbReference type="GO" id="GO:0009252">
    <property type="term" value="P:peptidoglycan biosynthetic process"/>
    <property type="evidence" value="ECO:0007669"/>
    <property type="project" value="UniProtKB-UniRule"/>
</dbReference>
<dbReference type="GO" id="GO:0008360">
    <property type="term" value="P:regulation of cell shape"/>
    <property type="evidence" value="ECO:0007669"/>
    <property type="project" value="UniProtKB-KW"/>
</dbReference>
<dbReference type="Gene3D" id="3.90.190.20">
    <property type="entry name" value="Mur ligase, C-terminal domain"/>
    <property type="match status" value="1"/>
</dbReference>
<dbReference type="Gene3D" id="3.40.1190.10">
    <property type="entry name" value="Mur-like, catalytic domain"/>
    <property type="match status" value="1"/>
</dbReference>
<dbReference type="Gene3D" id="3.40.50.720">
    <property type="entry name" value="NAD(P)-binding Rossmann-like Domain"/>
    <property type="match status" value="1"/>
</dbReference>
<dbReference type="HAMAP" id="MF_00639">
    <property type="entry name" value="MurD"/>
    <property type="match status" value="1"/>
</dbReference>
<dbReference type="InterPro" id="IPR018109">
    <property type="entry name" value="Folylpolyglutamate_synth_CS"/>
</dbReference>
<dbReference type="InterPro" id="IPR036565">
    <property type="entry name" value="Mur-like_cat_sf"/>
</dbReference>
<dbReference type="InterPro" id="IPR004101">
    <property type="entry name" value="Mur_ligase_C"/>
</dbReference>
<dbReference type="InterPro" id="IPR036615">
    <property type="entry name" value="Mur_ligase_C_dom_sf"/>
</dbReference>
<dbReference type="InterPro" id="IPR013221">
    <property type="entry name" value="Mur_ligase_cen"/>
</dbReference>
<dbReference type="InterPro" id="IPR005762">
    <property type="entry name" value="MurD"/>
</dbReference>
<dbReference type="NCBIfam" id="TIGR01087">
    <property type="entry name" value="murD"/>
    <property type="match status" value="1"/>
</dbReference>
<dbReference type="PANTHER" id="PTHR43692">
    <property type="entry name" value="UDP-N-ACETYLMURAMOYLALANINE--D-GLUTAMATE LIGASE"/>
    <property type="match status" value="1"/>
</dbReference>
<dbReference type="PANTHER" id="PTHR43692:SF1">
    <property type="entry name" value="UDP-N-ACETYLMURAMOYLALANINE--D-GLUTAMATE LIGASE"/>
    <property type="match status" value="1"/>
</dbReference>
<dbReference type="Pfam" id="PF02875">
    <property type="entry name" value="Mur_ligase_C"/>
    <property type="match status" value="1"/>
</dbReference>
<dbReference type="Pfam" id="PF08245">
    <property type="entry name" value="Mur_ligase_M"/>
    <property type="match status" value="1"/>
</dbReference>
<dbReference type="SUPFAM" id="SSF51984">
    <property type="entry name" value="MurCD N-terminal domain"/>
    <property type="match status" value="1"/>
</dbReference>
<dbReference type="SUPFAM" id="SSF53623">
    <property type="entry name" value="MurD-like peptide ligases, catalytic domain"/>
    <property type="match status" value="1"/>
</dbReference>
<dbReference type="SUPFAM" id="SSF53244">
    <property type="entry name" value="MurD-like peptide ligases, peptide-binding domain"/>
    <property type="match status" value="1"/>
</dbReference>